<evidence type="ECO:0000255" key="1">
    <source>
        <dbReference type="HAMAP-Rule" id="MF_00402"/>
    </source>
</evidence>
<evidence type="ECO:0000305" key="2"/>
<protein>
    <recommendedName>
        <fullName evidence="1">Large ribosomal subunit protein bL19</fullName>
    </recommendedName>
    <alternativeName>
        <fullName evidence="2">50S ribosomal protein L19</fullName>
    </alternativeName>
</protein>
<keyword id="KW-1185">Reference proteome</keyword>
<keyword id="KW-0687">Ribonucleoprotein</keyword>
<keyword id="KW-0689">Ribosomal protein</keyword>
<reference key="1">
    <citation type="journal article" date="2008" name="Proc. Natl. Acad. Sci. U.S.A.">
        <title>Nitrogen fixation island and rhizosphere competence traits in the genome of root-associated Pseudomonas stutzeri A1501.</title>
        <authorList>
            <person name="Yan Y."/>
            <person name="Yang J."/>
            <person name="Dou Y."/>
            <person name="Chen M."/>
            <person name="Ping S."/>
            <person name="Peng J."/>
            <person name="Lu W."/>
            <person name="Zhang W."/>
            <person name="Yao Z."/>
            <person name="Li H."/>
            <person name="Liu W."/>
            <person name="He S."/>
            <person name="Geng L."/>
            <person name="Zhang X."/>
            <person name="Yang F."/>
            <person name="Yu H."/>
            <person name="Zhan Y."/>
            <person name="Li D."/>
            <person name="Lin Z."/>
            <person name="Wang Y."/>
            <person name="Elmerich C."/>
            <person name="Lin M."/>
            <person name="Jin Q."/>
        </authorList>
    </citation>
    <scope>NUCLEOTIDE SEQUENCE [LARGE SCALE GENOMIC DNA]</scope>
    <source>
        <strain>A1501</strain>
    </source>
</reference>
<organism>
    <name type="scientific">Stutzerimonas stutzeri (strain A1501)</name>
    <name type="common">Pseudomonas stutzeri</name>
    <dbReference type="NCBI Taxonomy" id="379731"/>
    <lineage>
        <taxon>Bacteria</taxon>
        <taxon>Pseudomonadati</taxon>
        <taxon>Pseudomonadota</taxon>
        <taxon>Gammaproteobacteria</taxon>
        <taxon>Pseudomonadales</taxon>
        <taxon>Pseudomonadaceae</taxon>
        <taxon>Stutzerimonas</taxon>
    </lineage>
</organism>
<sequence>MTNKIIQQLEAEQMTKEIPPFAPGDTVIVQVKVKEGDRQRLQAFEGVVIGKRNRGLNSAFTVRKISNGVGVERTFQSYSPMVDSISVKRRGDVRKAKLYYLRALSGKAARIKEKLV</sequence>
<gene>
    <name evidence="1" type="primary">rplS</name>
    <name type="ordered locus">PST_1194</name>
</gene>
<accession>A4VIT8</accession>
<comment type="function">
    <text evidence="1">This protein is located at the 30S-50S ribosomal subunit interface and may play a role in the structure and function of the aminoacyl-tRNA binding site.</text>
</comment>
<comment type="similarity">
    <text evidence="1">Belongs to the bacterial ribosomal protein bL19 family.</text>
</comment>
<feature type="chain" id="PRO_1000049724" description="Large ribosomal subunit protein bL19">
    <location>
        <begin position="1"/>
        <end position="116"/>
    </location>
</feature>
<name>RL19_STUS1</name>
<dbReference type="EMBL" id="CP000304">
    <property type="protein sequence ID" value="ABP78889.1"/>
    <property type="molecule type" value="Genomic_DNA"/>
</dbReference>
<dbReference type="RefSeq" id="WP_011912376.1">
    <property type="nucleotide sequence ID" value="NC_009434.1"/>
</dbReference>
<dbReference type="SMR" id="A4VIT8"/>
<dbReference type="GeneID" id="66820345"/>
<dbReference type="KEGG" id="psa:PST_1194"/>
<dbReference type="eggNOG" id="COG0335">
    <property type="taxonomic scope" value="Bacteria"/>
</dbReference>
<dbReference type="HOGENOM" id="CLU_103507_2_1_6"/>
<dbReference type="Proteomes" id="UP000000233">
    <property type="component" value="Chromosome"/>
</dbReference>
<dbReference type="GO" id="GO:0022625">
    <property type="term" value="C:cytosolic large ribosomal subunit"/>
    <property type="evidence" value="ECO:0007669"/>
    <property type="project" value="TreeGrafter"/>
</dbReference>
<dbReference type="GO" id="GO:0003735">
    <property type="term" value="F:structural constituent of ribosome"/>
    <property type="evidence" value="ECO:0007669"/>
    <property type="project" value="InterPro"/>
</dbReference>
<dbReference type="GO" id="GO:0006412">
    <property type="term" value="P:translation"/>
    <property type="evidence" value="ECO:0007669"/>
    <property type="project" value="UniProtKB-UniRule"/>
</dbReference>
<dbReference type="FunFam" id="2.30.30.790:FF:000001">
    <property type="entry name" value="50S ribosomal protein L19"/>
    <property type="match status" value="1"/>
</dbReference>
<dbReference type="Gene3D" id="2.30.30.790">
    <property type="match status" value="1"/>
</dbReference>
<dbReference type="HAMAP" id="MF_00402">
    <property type="entry name" value="Ribosomal_bL19"/>
    <property type="match status" value="1"/>
</dbReference>
<dbReference type="InterPro" id="IPR001857">
    <property type="entry name" value="Ribosomal_bL19"/>
</dbReference>
<dbReference type="InterPro" id="IPR018257">
    <property type="entry name" value="Ribosomal_bL19_CS"/>
</dbReference>
<dbReference type="InterPro" id="IPR038657">
    <property type="entry name" value="Ribosomal_bL19_sf"/>
</dbReference>
<dbReference type="InterPro" id="IPR008991">
    <property type="entry name" value="Translation_prot_SH3-like_sf"/>
</dbReference>
<dbReference type="NCBIfam" id="TIGR01024">
    <property type="entry name" value="rplS_bact"/>
    <property type="match status" value="1"/>
</dbReference>
<dbReference type="PANTHER" id="PTHR15680:SF9">
    <property type="entry name" value="LARGE RIBOSOMAL SUBUNIT PROTEIN BL19M"/>
    <property type="match status" value="1"/>
</dbReference>
<dbReference type="PANTHER" id="PTHR15680">
    <property type="entry name" value="RIBOSOMAL PROTEIN L19"/>
    <property type="match status" value="1"/>
</dbReference>
<dbReference type="Pfam" id="PF01245">
    <property type="entry name" value="Ribosomal_L19"/>
    <property type="match status" value="1"/>
</dbReference>
<dbReference type="PIRSF" id="PIRSF002191">
    <property type="entry name" value="Ribosomal_L19"/>
    <property type="match status" value="1"/>
</dbReference>
<dbReference type="PRINTS" id="PR00061">
    <property type="entry name" value="RIBOSOMALL19"/>
</dbReference>
<dbReference type="SUPFAM" id="SSF50104">
    <property type="entry name" value="Translation proteins SH3-like domain"/>
    <property type="match status" value="1"/>
</dbReference>
<dbReference type="PROSITE" id="PS01015">
    <property type="entry name" value="RIBOSOMAL_L19"/>
    <property type="match status" value="1"/>
</dbReference>
<proteinExistence type="inferred from homology"/>